<accession>G1SZ47</accession>
<gene>
    <name type="primary">RPS23</name>
</gene>
<keyword id="KW-0002">3D-structure</keyword>
<keyword id="KW-0007">Acetylation</keyword>
<keyword id="KW-0963">Cytoplasm</keyword>
<keyword id="KW-0256">Endoplasmic reticulum</keyword>
<keyword id="KW-0379">Hydroxylation</keyword>
<keyword id="KW-1017">Isopeptide bond</keyword>
<keyword id="KW-0539">Nucleus</keyword>
<keyword id="KW-1185">Reference proteome</keyword>
<keyword id="KW-0687">Ribonucleoprotein</keyword>
<keyword id="KW-0689">Ribosomal protein</keyword>
<keyword id="KW-0832">Ubl conjugation</keyword>
<comment type="function">
    <text evidence="1 5 6 7 9">Component of the ribosome, a large ribonucleoprotein complex responsible for the synthesis of proteins in the cell (PubMed:23873042, PubMed:25601755, PubMed:26245381, PubMed:30517857). The small ribosomal subunit (SSU) binds messenger RNAs (mRNAs) and translates the encoded message by selecting cognate aminoacyl-transfer RNA (tRNA) molecules (PubMed:23873042, PubMed:25601755, PubMed:26245381, PubMed:30517857). The large subunit (LSU) contains the ribosomal catalytic site termed the peptidyl transferase center (PTC), which catalyzes the formation of peptide bonds, thereby polymerizing the amino acids delivered by tRNAs into a polypeptide chain (PubMed:23873042, PubMed:25601755, PubMed:26245381, PubMed:30517857). The nascent polypeptides leave the ribosome through a tunnel in the LSU and interact with protein factors that function in enzymatic processing, targeting, and the membrane insertion of nascent chains at the exit of the ribosomal tunnel (By similarity). Plays an important role in translational accuracy (By similarity). Part of the small subunit (SSU) processome, first precursor of the small eukaryotic ribosomal subunit (By similarity). During the assembly of the SSU processome in the nucleolus, many ribosome biogenesis factors, an RNA chaperone and ribosomal proteins associate with the nascent pre-rRNA and work in concert to generate RNA folding, modifications, rearrangements and cleavage as well as targeted degradation of pre-ribosomal RNA by the RNA exosome (By similarity).</text>
</comment>
<comment type="subunit">
    <text evidence="1 5 6 7 8 9 10 11 12 13 14 15 16 17">Component of the 40S small ribosomal subunit (PubMed:23873042, PubMed:25601755, PubMed:26245381, PubMed:29856316, PubMed:30517857, PubMed:31246176, PubMed:31609474, PubMed:32286223, PubMed:33296660, PubMed:35679869, PubMed:35709277, PubMed:35822879, PubMed:36653451). Part of the small subunit (SSU) processome, composed of more than 70 proteins and the RNA chaperone small nucleolar RNA (snoRNA) U3 (By similarity).</text>
</comment>
<comment type="subcellular location">
    <subcellularLocation>
        <location evidence="1">Cytoplasm</location>
        <location evidence="1">Cytosol</location>
    </subcellularLocation>
    <subcellularLocation>
        <location evidence="5 6 7 8 9 10 11 12 13 14 15 16 17">Cytoplasm</location>
    </subcellularLocation>
    <subcellularLocation>
        <location evidence="3">Rough endoplasmic reticulum</location>
    </subcellularLocation>
    <subcellularLocation>
        <location evidence="1">Nucleus</location>
        <location evidence="1">Nucleolus</location>
    </subcellularLocation>
    <text evidence="1 3">Detected on cytosolic polysomes (By similarity). Detected in ribosomes that are associated with the rough endoplasmic reticulum (By similarity).</text>
</comment>
<comment type="PTM">
    <text evidence="1">Hydroxylation at Pro-62 affects translation termination efficiency.</text>
</comment>
<comment type="similarity">
    <text evidence="18">Belongs to the universal ribosomal protein uS12 family.</text>
</comment>
<organism>
    <name type="scientific">Oryctolagus cuniculus</name>
    <name type="common">Rabbit</name>
    <dbReference type="NCBI Taxonomy" id="9986"/>
    <lineage>
        <taxon>Eukaryota</taxon>
        <taxon>Metazoa</taxon>
        <taxon>Chordata</taxon>
        <taxon>Craniata</taxon>
        <taxon>Vertebrata</taxon>
        <taxon>Euteleostomi</taxon>
        <taxon>Mammalia</taxon>
        <taxon>Eutheria</taxon>
        <taxon>Euarchontoglires</taxon>
        <taxon>Glires</taxon>
        <taxon>Lagomorpha</taxon>
        <taxon>Leporidae</taxon>
        <taxon>Oryctolagus</taxon>
    </lineage>
</organism>
<evidence type="ECO:0000250" key="1">
    <source>
        <dbReference type="UniProtKB" id="P62266"/>
    </source>
</evidence>
<evidence type="ECO:0000250" key="2">
    <source>
        <dbReference type="UniProtKB" id="P62267"/>
    </source>
</evidence>
<evidence type="ECO:0000250" key="3">
    <source>
        <dbReference type="UniProtKB" id="Q6SA96"/>
    </source>
</evidence>
<evidence type="ECO:0000256" key="4">
    <source>
        <dbReference type="SAM" id="MobiDB-lite"/>
    </source>
</evidence>
<evidence type="ECO:0000269" key="5">
    <source>
    </source>
</evidence>
<evidence type="ECO:0000269" key="6">
    <source>
    </source>
</evidence>
<evidence type="ECO:0000269" key="7">
    <source>
    </source>
</evidence>
<evidence type="ECO:0000269" key="8">
    <source>
    </source>
</evidence>
<evidence type="ECO:0000269" key="9">
    <source>
    </source>
</evidence>
<evidence type="ECO:0000269" key="10">
    <source>
    </source>
</evidence>
<evidence type="ECO:0000269" key="11">
    <source>
    </source>
</evidence>
<evidence type="ECO:0000269" key="12">
    <source>
    </source>
</evidence>
<evidence type="ECO:0000269" key="13">
    <source>
    </source>
</evidence>
<evidence type="ECO:0000269" key="14">
    <source>
    </source>
</evidence>
<evidence type="ECO:0000269" key="15">
    <source>
    </source>
</evidence>
<evidence type="ECO:0000269" key="16">
    <source>
    </source>
</evidence>
<evidence type="ECO:0000269" key="17">
    <source>
    </source>
</evidence>
<evidence type="ECO:0000305" key="18"/>
<evidence type="ECO:0007744" key="19">
    <source>
        <dbReference type="PDB" id="3JAG"/>
    </source>
</evidence>
<evidence type="ECO:0007744" key="20">
    <source>
        <dbReference type="PDB" id="3JAH"/>
    </source>
</evidence>
<evidence type="ECO:0007744" key="21">
    <source>
        <dbReference type="PDB" id="4D5L"/>
    </source>
</evidence>
<evidence type="ECO:0007744" key="22">
    <source>
        <dbReference type="PDB" id="4D61"/>
    </source>
</evidence>
<evidence type="ECO:0007744" key="23">
    <source>
        <dbReference type="PDB" id="4KZX"/>
    </source>
</evidence>
<evidence type="ECO:0007744" key="24">
    <source>
        <dbReference type="PDB" id="4KZY"/>
    </source>
</evidence>
<evidence type="ECO:0007744" key="25">
    <source>
        <dbReference type="PDB" id="6D90"/>
    </source>
</evidence>
<evidence type="ECO:0007744" key="26">
    <source>
        <dbReference type="PDB" id="6D9J"/>
    </source>
</evidence>
<evidence type="ECO:0007744" key="27">
    <source>
        <dbReference type="PDB" id="6GZ3"/>
    </source>
</evidence>
<evidence type="ECO:0007744" key="28">
    <source>
        <dbReference type="PDB" id="6P5I"/>
    </source>
</evidence>
<evidence type="ECO:0007744" key="29">
    <source>
        <dbReference type="PDB" id="6P5J"/>
    </source>
</evidence>
<evidence type="ECO:0007744" key="30">
    <source>
        <dbReference type="PDB" id="6R5Q"/>
    </source>
</evidence>
<evidence type="ECO:0007744" key="31">
    <source>
        <dbReference type="PDB" id="6R6G"/>
    </source>
</evidence>
<evidence type="ECO:0007744" key="32">
    <source>
        <dbReference type="PDB" id="6W2S"/>
    </source>
</evidence>
<evidence type="ECO:0007744" key="33">
    <source>
        <dbReference type="PDB" id="6W2T"/>
    </source>
</evidence>
<evidence type="ECO:0007744" key="34">
    <source>
        <dbReference type="PDB" id="6ZVK"/>
    </source>
</evidence>
<evidence type="ECO:0007744" key="35">
    <source>
        <dbReference type="PDB" id="7A01"/>
    </source>
</evidence>
<evidence type="ECO:0007744" key="36">
    <source>
        <dbReference type="PDB" id="7OYD"/>
    </source>
</evidence>
<evidence type="ECO:0007744" key="37">
    <source>
        <dbReference type="PDB" id="7SYO"/>
    </source>
</evidence>
<evidence type="ECO:0007744" key="38">
    <source>
        <dbReference type="PDB" id="7SYP"/>
    </source>
</evidence>
<evidence type="ECO:0007744" key="39">
    <source>
        <dbReference type="PDB" id="7UCJ"/>
    </source>
</evidence>
<evidence type="ECO:0007744" key="40">
    <source>
        <dbReference type="PDB" id="7UCK"/>
    </source>
</evidence>
<evidence type="ECO:0007744" key="41">
    <source>
        <dbReference type="PDB" id="7ZJW"/>
    </source>
</evidence>
<evidence type="ECO:0007744" key="42">
    <source>
        <dbReference type="PDB" id="7ZJX"/>
    </source>
</evidence>
<evidence type="ECO:0007829" key="43">
    <source>
        <dbReference type="PDB" id="6P4G"/>
    </source>
</evidence>
<evidence type="ECO:0007829" key="44">
    <source>
        <dbReference type="PDB" id="6YAL"/>
    </source>
</evidence>
<evidence type="ECO:0007829" key="45">
    <source>
        <dbReference type="PDB" id="6YAN"/>
    </source>
</evidence>
<evidence type="ECO:0007829" key="46">
    <source>
        <dbReference type="PDB" id="7JQB"/>
    </source>
</evidence>
<evidence type="ECO:0007829" key="47">
    <source>
        <dbReference type="PDB" id="7JQC"/>
    </source>
</evidence>
<evidence type="ECO:0007829" key="48">
    <source>
        <dbReference type="PDB" id="8P03"/>
    </source>
</evidence>
<proteinExistence type="evidence at protein level"/>
<reference key="1">
    <citation type="journal article" date="2011" name="Nature">
        <title>A high-resolution map of human evolutionary constraint using 29 mammals.</title>
        <authorList>
            <person name="Lindblad-Toh K."/>
            <person name="Garber M."/>
            <person name="Zuk O."/>
            <person name="Lin M.F."/>
            <person name="Parker B.J."/>
            <person name="Washietl S."/>
            <person name="Kheradpour P."/>
            <person name="Ernst J."/>
            <person name="Jordan G."/>
            <person name="Mauceli E."/>
            <person name="Ward L.D."/>
            <person name="Lowe C.B."/>
            <person name="Holloway A.K."/>
            <person name="Clamp M."/>
            <person name="Gnerre S."/>
            <person name="Alfoldi J."/>
            <person name="Beal K."/>
            <person name="Chang J."/>
            <person name="Clawson H."/>
            <person name="Cuff J."/>
            <person name="Di Palma F."/>
            <person name="Fitzgerald S."/>
            <person name="Flicek P."/>
            <person name="Guttman M."/>
            <person name="Hubisz M.J."/>
            <person name="Jaffe D.B."/>
            <person name="Jungreis I."/>
            <person name="Kent W.J."/>
            <person name="Kostka D."/>
            <person name="Lara M."/>
            <person name="Martins A.L."/>
            <person name="Massingham T."/>
            <person name="Moltke I."/>
            <person name="Raney B.J."/>
            <person name="Rasmussen M.D."/>
            <person name="Robinson J."/>
            <person name="Stark A."/>
            <person name="Vilella A.J."/>
            <person name="Wen J."/>
            <person name="Xie X."/>
            <person name="Zody M.C."/>
            <person name="Baldwin J."/>
            <person name="Bloom T."/>
            <person name="Chin C.W."/>
            <person name="Heiman D."/>
            <person name="Nicol R."/>
            <person name="Nusbaum C."/>
            <person name="Young S."/>
            <person name="Wilkinson J."/>
            <person name="Worley K.C."/>
            <person name="Kovar C.L."/>
            <person name="Muzny D.M."/>
            <person name="Gibbs R.A."/>
            <person name="Cree A."/>
            <person name="Dihn H.H."/>
            <person name="Fowler G."/>
            <person name="Jhangiani S."/>
            <person name="Joshi V."/>
            <person name="Lee S."/>
            <person name="Lewis L.R."/>
            <person name="Nazareth L.V."/>
            <person name="Okwuonu G."/>
            <person name="Santibanez J."/>
            <person name="Warren W.C."/>
            <person name="Mardis E.R."/>
            <person name="Weinstock G.M."/>
            <person name="Wilson R.K."/>
            <person name="Delehaunty K."/>
            <person name="Dooling D."/>
            <person name="Fronik C."/>
            <person name="Fulton L."/>
            <person name="Fulton B."/>
            <person name="Graves T."/>
            <person name="Minx P."/>
            <person name="Sodergren E."/>
            <person name="Birney E."/>
            <person name="Margulies E.H."/>
            <person name="Herrero J."/>
            <person name="Green E.D."/>
            <person name="Haussler D."/>
            <person name="Siepel A."/>
            <person name="Goldman N."/>
            <person name="Pollard K.S."/>
            <person name="Pedersen J.S."/>
            <person name="Lander E.S."/>
            <person name="Kellis M."/>
        </authorList>
    </citation>
    <scope>NUCLEOTIDE SEQUENCE [LARGE SCALE GENOMIC DNA]</scope>
    <source>
        <strain>Thorbecke</strain>
    </source>
</reference>
<reference evidence="23 24" key="2">
    <citation type="journal article" date="2013" name="Nature">
        <title>The initiation of mammalian protein synthesis and mRNA scanning mechanism.</title>
        <authorList>
            <person name="Lomakin I.B."/>
            <person name="Steitz T.A."/>
        </authorList>
    </citation>
    <scope>X-RAY CRYSTALLOGRAPHY (7.01 ANGSTROMS) OF 2-143 OF 40S RIBOSOME</scope>
    <scope>FUNCTION</scope>
    <scope>SUBUNIT</scope>
    <scope>SUBCELLULAR LOCATION</scope>
</reference>
<reference evidence="21 22" key="3">
    <citation type="journal article" date="2015" name="Mol. Cell">
        <title>Cryo-EM of ribosomal 80S complexes with termination factors reveals the translocated cricket paralysis virus IRES.</title>
        <authorList>
            <person name="Muhs M."/>
            <person name="Hilal T."/>
            <person name="Mielke T."/>
            <person name="Skabkin M.A."/>
            <person name="Sanbonmatsu K.Y."/>
            <person name="Pestova T.V."/>
            <person name="Spahn C.M."/>
        </authorList>
    </citation>
    <scope>STRUCTURE BY ELECTRON MICROSCOPY (9.00 ANGSTROMS) OF RIBOSOME</scope>
    <scope>FUNCTION</scope>
    <scope>SUBUNIT</scope>
    <scope>SUBCELLULAR LOCATION</scope>
</reference>
<reference evidence="19 20" key="4">
    <citation type="journal article" date="2015" name="Nature">
        <title>Structural basis for stop codon recognition in eukaryotes.</title>
        <authorList>
            <person name="Brown A."/>
            <person name="Shao S."/>
            <person name="Murray J."/>
            <person name="Hegde R.S."/>
            <person name="Ramakrishnan V."/>
        </authorList>
    </citation>
    <scope>STRUCTURE BY ELECTRON MICROSCOPY (3.45 ANGSTROMS) OF 2-142 OF RIBOSOME</scope>
    <scope>FUNCTION</scope>
    <scope>SUBCELLULAR LOCATION</scope>
    <scope>SUBUNIT</scope>
</reference>
<reference evidence="27" key="5">
    <citation type="journal article" date="2018" name="Cell Rep.">
        <title>tRNA translocation by the eukaryotic 80S ribosome and the impact of GTP hydrolysis.</title>
        <authorList>
            <person name="Flis J."/>
            <person name="Holm M."/>
            <person name="Rundlet E.J."/>
            <person name="Loerke J."/>
            <person name="Hilal T."/>
            <person name="Dabrowski M."/>
            <person name="Burger J."/>
            <person name="Mielke T."/>
            <person name="Blanchard S.C."/>
            <person name="Spahn C.M.T."/>
            <person name="Budkevich T.V."/>
        </authorList>
    </citation>
    <scope>STRUCTURE BY ELECTRON MICROSCOPY (3.60 ANGSTROMS) OF 2-142 OF RIBOSOME</scope>
    <scope>FUNCTION</scope>
    <scope>SUBCELLULAR LOCATION</scope>
    <scope>SUBUNIT</scope>
</reference>
<reference evidence="25 26" key="6">
    <citation type="journal article" date="2018" name="Elife">
        <title>Dual tRNA mimicry in the Cricket paralysis virus IRES uncovers an unexpected similarity with the Hepatitis C Virus IRES.</title>
        <authorList>
            <person name="Pisareva V.P."/>
            <person name="Pisarev A.V."/>
            <person name="Fernandez I.S."/>
        </authorList>
    </citation>
    <scope>STRUCTURE BY ELECTRON MICROSCOPY (3.20 ANGSTROMS) OF 2-143 OF RIBOSOME</scope>
    <scope>SUBCELLULAR LOCATION</scope>
    <scope>SUBUNIT</scope>
</reference>
<reference evidence="30 31" key="7">
    <citation type="journal article" date="2019" name="Elife">
        <title>Structural and mutational analysis of the ribosome-arresting human XBP1u.</title>
        <authorList>
            <person name="Shanmuganathan V."/>
            <person name="Schiller N."/>
            <person name="Magoulopoulou A."/>
            <person name="Cheng J."/>
            <person name="Braunger K."/>
            <person name="Cymer F."/>
            <person name="Berninghausen O."/>
            <person name="Beatrix B."/>
            <person name="Kohno K."/>
            <person name="von Heijne G."/>
            <person name="Beckmann R."/>
        </authorList>
    </citation>
    <scope>STRUCTURE BY ELECTRON MICROSCOPY (3.00 ANGSTROMS) OF 2-142 OF RIBOSOME</scope>
    <scope>SUBCELLULAR LOCATION</scope>
    <scope>SUBUNIT</scope>
</reference>
<reference evidence="28 29" key="8">
    <citation type="journal article" date="2019" name="EMBO J.">
        <title>The Israeli acute paralysis virus IRES captures host ribosomes by mimicking a ribosomal state with hybrid tRNAs.</title>
        <authorList>
            <person name="Acosta-Reyes F."/>
            <person name="Neupane R."/>
            <person name="Frank J."/>
            <person name="Fernandez I.S."/>
        </authorList>
    </citation>
    <scope>STRUCTURE BY ELECTRON MICROSCOPY (3.10 ANGSTROMS) OF 2-143 OF RIBOSOME</scope>
    <scope>SUBCELLULAR LOCATION</scope>
    <scope>SUBUNIT</scope>
</reference>
<reference evidence="34 35" key="9">
    <citation type="journal article" date="2020" name="Cell Rep.">
        <title>The Halastavi arva virus intergenic region IRES promotes translation by the simplest possible initiation mechanism.</title>
        <authorList>
            <person name="Abaeva I.S."/>
            <person name="Vicens Q."/>
            <person name="Bochler A."/>
            <person name="Soufari H."/>
            <person name="Simonetti A."/>
            <person name="Pestova T.V."/>
            <person name="Hashem Y."/>
            <person name="Hellen C.U.T."/>
        </authorList>
    </citation>
    <scope>STRUCTURE BY ELECTRON MICROSCOPY (3.49 ANGSTROMS) OF 2-142 OF RIBOSOME</scope>
    <scope>SUBCELLULAR LOCATION</scope>
    <scope>SUBUNIT</scope>
</reference>
<reference evidence="32 33" key="10">
    <citation type="journal article" date="2020" name="Elife">
        <title>A complex IRES at the 5'-UTR of a viral mRNA assembles a functional 48S complex via an uAUG intermediate.</title>
        <authorList>
            <person name="Neupane R."/>
            <person name="Pisareva V.P."/>
            <person name="Rodriguez C.F."/>
            <person name="Pisarev A.V."/>
            <person name="Fernandez I.S."/>
        </authorList>
    </citation>
    <scope>STRUCTURE BY ELECTRON MICROSCOPY (3.00 ANGSTROMS) OF 2-143 OF RIBOSOME</scope>
    <scope>SUBCELLULAR LOCATION</scope>
    <scope>SUBUNIT</scope>
</reference>
<reference evidence="37 38" key="11">
    <citation type="journal article" date="2022" name="EMBO J.">
        <title>Molecular architecture of 40S translation initiation complexes on the hepatitis C virus IRES.</title>
        <authorList>
            <person name="Brown Z.P."/>
            <person name="Abaeva I.S."/>
            <person name="De S."/>
            <person name="Hellen C.U.T."/>
            <person name="Pestova T.V."/>
            <person name="Frank J."/>
        </authorList>
    </citation>
    <scope>STRUCTURE BY ELECTRON MICROSCOPY (3.50 ANGSTROMS) OF RIBOSOME</scope>
    <scope>SUBCELLULAR LOCATION</scope>
    <scope>SUBUNIT</scope>
</reference>
<reference evidence="39 40" key="12">
    <citation type="journal article" date="2022" name="Mol. Cell">
        <title>Direct epitranscriptomic regulation of mammalian translation initiation through N4-acetylcytidine.</title>
        <authorList>
            <person name="Arango D."/>
            <person name="Sturgill D."/>
            <person name="Yang R."/>
            <person name="Kanai T."/>
            <person name="Bauer P."/>
            <person name="Roy J."/>
            <person name="Wang Z."/>
            <person name="Hosogane M."/>
            <person name="Schiffers S."/>
            <person name="Oberdoerffer S."/>
        </authorList>
    </citation>
    <scope>STRUCTURE BY ELECTRON MICROSCOPY (2.80 ANGSTROMS) OF 2-142 OF RIBOSOME</scope>
    <scope>SUBCELLULAR LOCATION</scope>
    <scope>SUBUNIT</scope>
</reference>
<reference evidence="41 42" key="13">
    <citation type="journal article" date="2022" name="Science">
        <title>Structure of the mammalian ribosome as it decodes the selenocysteine UGA codon.</title>
        <authorList>
            <person name="Hilal T."/>
            <person name="Killam B.Y."/>
            <person name="Grozdanovic M."/>
            <person name="Dobosz-Bartoszek M."/>
            <person name="Loerke J."/>
            <person name="Buerger J."/>
            <person name="Mielke T."/>
            <person name="Copeland P.R."/>
            <person name="Simonovic M."/>
            <person name="Spahn C.M.T."/>
        </authorList>
    </citation>
    <scope>STRUCTURE BY ELECTRON MICROSCOPY (2.80 ANGSTROMS) OF RIBOSOME</scope>
    <scope>SUBCELLULAR LOCATION</scope>
    <scope>SUBUNIT</scope>
</reference>
<reference evidence="36" key="14">
    <citation type="journal article" date="2023" name="Nature">
        <title>A molecular network of conserved factors keeps ribosomes dormant in the egg.</title>
        <authorList>
            <person name="Leesch F."/>
            <person name="Lorenzo-Orts L."/>
            <person name="Pribitzer C."/>
            <person name="Grishkovskaya I."/>
            <person name="Roehsner J."/>
            <person name="Chugunova A."/>
            <person name="Matzinger M."/>
            <person name="Roitinger E."/>
            <person name="Belacic K."/>
            <person name="Kandolf S."/>
            <person name="Lin T.Y."/>
            <person name="Mechtler K."/>
            <person name="Meinhart A."/>
            <person name="Haselbach D."/>
            <person name="Pauli A."/>
        </authorList>
    </citation>
    <scope>STRUCTURE BY ELECTRON MICROSCOPY (2.30 ANGSTROMS) OF RIBOSOME</scope>
    <scope>SUBCELLULAR LOCATION</scope>
    <scope>SUBUNIT</scope>
</reference>
<name>RS23_RABIT</name>
<sequence length="143" mass="15808">MGKCRGLRTARKLRSHRRDQKWHDKQYKKAHLGTALKANPFGGASHAKGIVLEKVGVEAKQPNSAIRKCVRVQLIKNGKKITAFVPNDGCLNFIEENDEVLVAGFGRKGHAVGDIPGVRFKVVKVANVSLLALYKGKKERPRS</sequence>
<dbReference type="EMBL" id="AAGW02043193">
    <property type="status" value="NOT_ANNOTATED_CDS"/>
    <property type="molecule type" value="Genomic_DNA"/>
</dbReference>
<dbReference type="RefSeq" id="XP_002713980.1">
    <property type="nucleotide sequence ID" value="XM_002713934.5"/>
</dbReference>
<dbReference type="PDB" id="3JAG">
    <property type="method" value="EM"/>
    <property type="resolution" value="3.65 A"/>
    <property type="chains" value="XX=2-142"/>
</dbReference>
<dbReference type="PDB" id="3JAH">
    <property type="method" value="EM"/>
    <property type="resolution" value="3.45 A"/>
    <property type="chains" value="XX=2-142"/>
</dbReference>
<dbReference type="PDB" id="3JAI">
    <property type="method" value="EM"/>
    <property type="resolution" value="3.65 A"/>
    <property type="chains" value="XX=2-142"/>
</dbReference>
<dbReference type="PDB" id="4D5L">
    <property type="method" value="EM"/>
    <property type="resolution" value="9.00 A"/>
    <property type="chains" value="X=2-143"/>
</dbReference>
<dbReference type="PDB" id="4D61">
    <property type="method" value="EM"/>
    <property type="resolution" value="9.00 A"/>
    <property type="chains" value="X=1-143"/>
</dbReference>
<dbReference type="PDB" id="4KZX">
    <property type="method" value="X-ray"/>
    <property type="resolution" value="7.81 A"/>
    <property type="chains" value="X=1-143"/>
</dbReference>
<dbReference type="PDB" id="4KZY">
    <property type="method" value="X-ray"/>
    <property type="resolution" value="7.01 A"/>
    <property type="chains" value="X=1-143"/>
</dbReference>
<dbReference type="PDB" id="4KZZ">
    <property type="method" value="X-ray"/>
    <property type="resolution" value="7.03 A"/>
    <property type="chains" value="X=1-143"/>
</dbReference>
<dbReference type="PDB" id="5K0Y">
    <property type="method" value="EM"/>
    <property type="resolution" value="5.80 A"/>
    <property type="chains" value="Q=1-142"/>
</dbReference>
<dbReference type="PDB" id="6D90">
    <property type="method" value="EM"/>
    <property type="resolution" value="3.20 A"/>
    <property type="chains" value="YY=2-143"/>
</dbReference>
<dbReference type="PDB" id="6D9J">
    <property type="method" value="EM"/>
    <property type="resolution" value="3.20 A"/>
    <property type="chains" value="YY=2-143"/>
</dbReference>
<dbReference type="PDB" id="6GZ3">
    <property type="method" value="EM"/>
    <property type="resolution" value="3.60 A"/>
    <property type="chains" value="BX=2-142"/>
</dbReference>
<dbReference type="PDB" id="6P4G">
    <property type="method" value="EM"/>
    <property type="resolution" value="3.10 A"/>
    <property type="chains" value="Y=2-143"/>
</dbReference>
<dbReference type="PDB" id="6P4H">
    <property type="method" value="EM"/>
    <property type="resolution" value="3.20 A"/>
    <property type="chains" value="Y=2-143"/>
</dbReference>
<dbReference type="PDB" id="6P5I">
    <property type="method" value="EM"/>
    <property type="resolution" value="3.10 A"/>
    <property type="chains" value="Y=2-143"/>
</dbReference>
<dbReference type="PDB" id="6P5J">
    <property type="method" value="EM"/>
    <property type="resolution" value="3.10 A"/>
    <property type="chains" value="Y=2-143"/>
</dbReference>
<dbReference type="PDB" id="6P5K">
    <property type="method" value="EM"/>
    <property type="resolution" value="3.10 A"/>
    <property type="chains" value="Y=2-143"/>
</dbReference>
<dbReference type="PDB" id="6P5N">
    <property type="method" value="EM"/>
    <property type="resolution" value="3.20 A"/>
    <property type="chains" value="Y=2-143"/>
</dbReference>
<dbReference type="PDB" id="6R5Q">
    <property type="method" value="EM"/>
    <property type="resolution" value="3.00 A"/>
    <property type="chains" value="VV=2-142"/>
</dbReference>
<dbReference type="PDB" id="6R6G">
    <property type="method" value="EM"/>
    <property type="resolution" value="3.70 A"/>
    <property type="chains" value="VV=2-142"/>
</dbReference>
<dbReference type="PDB" id="6R6P">
    <property type="method" value="EM"/>
    <property type="resolution" value="3.10 A"/>
    <property type="chains" value="VV=2-142"/>
</dbReference>
<dbReference type="PDB" id="6R7Q">
    <property type="method" value="EM"/>
    <property type="resolution" value="3.90 A"/>
    <property type="chains" value="VV=2-142"/>
</dbReference>
<dbReference type="PDB" id="6W2S">
    <property type="method" value="EM"/>
    <property type="resolution" value="3.00 A"/>
    <property type="chains" value="Y=2-143"/>
</dbReference>
<dbReference type="PDB" id="6W2T">
    <property type="method" value="EM"/>
    <property type="resolution" value="3.36 A"/>
    <property type="chains" value="Y=2-143"/>
</dbReference>
<dbReference type="PDB" id="6YAL">
    <property type="method" value="EM"/>
    <property type="resolution" value="3.00 A"/>
    <property type="chains" value="Z=1-143"/>
</dbReference>
<dbReference type="PDB" id="6YAM">
    <property type="method" value="EM"/>
    <property type="resolution" value="3.60 A"/>
    <property type="chains" value="Z=1-142"/>
</dbReference>
<dbReference type="PDB" id="6YAN">
    <property type="method" value="EM"/>
    <property type="resolution" value="3.48 A"/>
    <property type="chains" value="Z=1-142"/>
</dbReference>
<dbReference type="PDB" id="6ZVK">
    <property type="method" value="EM"/>
    <property type="resolution" value="3.49 A"/>
    <property type="chains" value="T3=2-142"/>
</dbReference>
<dbReference type="PDB" id="7A01">
    <property type="method" value="EM"/>
    <property type="resolution" value="3.60 A"/>
    <property type="chains" value="T3=2-142"/>
</dbReference>
<dbReference type="PDB" id="7JQB">
    <property type="method" value="EM"/>
    <property type="resolution" value="2.70 A"/>
    <property type="chains" value="c=1-143"/>
</dbReference>
<dbReference type="PDB" id="7JQC">
    <property type="method" value="EM"/>
    <property type="resolution" value="3.30 A"/>
    <property type="chains" value="c=1-143"/>
</dbReference>
<dbReference type="PDB" id="7MDZ">
    <property type="method" value="EM"/>
    <property type="resolution" value="3.20 A"/>
    <property type="chains" value="XX=1-143"/>
</dbReference>
<dbReference type="PDB" id="7NWG">
    <property type="method" value="EM"/>
    <property type="resolution" value="3.80 A"/>
    <property type="chains" value="Y2=2-142"/>
</dbReference>
<dbReference type="PDB" id="7NWH">
    <property type="method" value="EM"/>
    <property type="resolution" value="4.10 A"/>
    <property type="chains" value="XX=1-142"/>
</dbReference>
<dbReference type="PDB" id="7NWI">
    <property type="method" value="EM"/>
    <property type="resolution" value="3.13 A"/>
    <property type="chains" value="XX=2-142"/>
</dbReference>
<dbReference type="PDB" id="7O7Y">
    <property type="method" value="EM"/>
    <property type="resolution" value="2.20 A"/>
    <property type="chains" value="Aw=1-143"/>
</dbReference>
<dbReference type="PDB" id="7O7Z">
    <property type="method" value="EM"/>
    <property type="resolution" value="2.40 A"/>
    <property type="chains" value="Aw=1-143"/>
</dbReference>
<dbReference type="PDB" id="7O80">
    <property type="method" value="EM"/>
    <property type="resolution" value="2.90 A"/>
    <property type="chains" value="Aw=1-143"/>
</dbReference>
<dbReference type="PDB" id="7O81">
    <property type="method" value="EM"/>
    <property type="resolution" value="3.10 A"/>
    <property type="chains" value="Aw=1-143"/>
</dbReference>
<dbReference type="PDB" id="7OYD">
    <property type="method" value="EM"/>
    <property type="resolution" value="2.30 A"/>
    <property type="chains" value="XX=1-143"/>
</dbReference>
<dbReference type="PDB" id="7SYG">
    <property type="method" value="EM"/>
    <property type="resolution" value="4.30 A"/>
    <property type="chains" value="Y=1-143"/>
</dbReference>
<dbReference type="PDB" id="7SYH">
    <property type="method" value="EM"/>
    <property type="resolution" value="4.60 A"/>
    <property type="chains" value="Y=1-143"/>
</dbReference>
<dbReference type="PDB" id="7SYI">
    <property type="method" value="EM"/>
    <property type="resolution" value="4.50 A"/>
    <property type="chains" value="Y=1-143"/>
</dbReference>
<dbReference type="PDB" id="7SYJ">
    <property type="method" value="EM"/>
    <property type="resolution" value="4.80 A"/>
    <property type="chains" value="Y=1-143"/>
</dbReference>
<dbReference type="PDB" id="7SYK">
    <property type="method" value="EM"/>
    <property type="resolution" value="4.20 A"/>
    <property type="chains" value="Y=1-143"/>
</dbReference>
<dbReference type="PDB" id="7SYL">
    <property type="method" value="EM"/>
    <property type="resolution" value="4.50 A"/>
    <property type="chains" value="Y=1-143"/>
</dbReference>
<dbReference type="PDB" id="7SYM">
    <property type="method" value="EM"/>
    <property type="resolution" value="4.80 A"/>
    <property type="chains" value="Y=1-143"/>
</dbReference>
<dbReference type="PDB" id="7SYN">
    <property type="method" value="EM"/>
    <property type="resolution" value="4.00 A"/>
    <property type="chains" value="Y=1-143"/>
</dbReference>
<dbReference type="PDB" id="7SYO">
    <property type="method" value="EM"/>
    <property type="resolution" value="4.60 A"/>
    <property type="chains" value="Y=1-143"/>
</dbReference>
<dbReference type="PDB" id="7SYP">
    <property type="method" value="EM"/>
    <property type="resolution" value="4.00 A"/>
    <property type="chains" value="Y=1-143"/>
</dbReference>
<dbReference type="PDB" id="7SYQ">
    <property type="method" value="EM"/>
    <property type="resolution" value="3.80 A"/>
    <property type="chains" value="Y=1-143"/>
</dbReference>
<dbReference type="PDB" id="7SYR">
    <property type="method" value="EM"/>
    <property type="resolution" value="3.60 A"/>
    <property type="chains" value="Y=1-143"/>
</dbReference>
<dbReference type="PDB" id="7SYS">
    <property type="method" value="EM"/>
    <property type="resolution" value="3.50 A"/>
    <property type="chains" value="Y=1-143"/>
</dbReference>
<dbReference type="PDB" id="7SYT">
    <property type="method" value="EM"/>
    <property type="resolution" value="4.40 A"/>
    <property type="chains" value="Y=1-143"/>
</dbReference>
<dbReference type="PDB" id="7SYU">
    <property type="method" value="EM"/>
    <property type="resolution" value="4.60 A"/>
    <property type="chains" value="Y=1-143"/>
</dbReference>
<dbReference type="PDB" id="7SYV">
    <property type="method" value="EM"/>
    <property type="resolution" value="3.90 A"/>
    <property type="chains" value="Y=1-143"/>
</dbReference>
<dbReference type="PDB" id="7SYW">
    <property type="method" value="EM"/>
    <property type="resolution" value="3.70 A"/>
    <property type="chains" value="Y=1-143"/>
</dbReference>
<dbReference type="PDB" id="7SYX">
    <property type="method" value="EM"/>
    <property type="resolution" value="3.70 A"/>
    <property type="chains" value="Y=1-143"/>
</dbReference>
<dbReference type="PDB" id="7TOQ">
    <property type="method" value="EM"/>
    <property type="resolution" value="3.10 A"/>
    <property type="chains" value="AS23=2-142"/>
</dbReference>
<dbReference type="PDB" id="7TOR">
    <property type="method" value="EM"/>
    <property type="resolution" value="2.90 A"/>
    <property type="chains" value="AS23=2-142"/>
</dbReference>
<dbReference type="PDB" id="7UCJ">
    <property type="method" value="EM"/>
    <property type="resolution" value="3.10 A"/>
    <property type="chains" value="XX=2-142"/>
</dbReference>
<dbReference type="PDB" id="7UCK">
    <property type="method" value="EM"/>
    <property type="resolution" value="2.80 A"/>
    <property type="chains" value="XX=2-142"/>
</dbReference>
<dbReference type="PDB" id="7ZJW">
    <property type="method" value="EM"/>
    <property type="resolution" value="2.80 A"/>
    <property type="chains" value="Si=1-143"/>
</dbReference>
<dbReference type="PDB" id="7ZJX">
    <property type="method" value="EM"/>
    <property type="resolution" value="3.10 A"/>
    <property type="chains" value="Si=1-143"/>
</dbReference>
<dbReference type="PDB" id="8BHF">
    <property type="method" value="EM"/>
    <property type="resolution" value="3.10 A"/>
    <property type="chains" value="Y3=2-142"/>
</dbReference>
<dbReference type="PDB" id="8BTK">
    <property type="method" value="EM"/>
    <property type="resolution" value="3.50 A"/>
    <property type="chains" value="Aw=1-143"/>
</dbReference>
<dbReference type="PDB" id="8P03">
    <property type="method" value="EM"/>
    <property type="resolution" value="3.04 A"/>
    <property type="chains" value="Z=1-143"/>
</dbReference>
<dbReference type="PDB" id="8P09">
    <property type="method" value="EM"/>
    <property type="resolution" value="3.30 A"/>
    <property type="chains" value="Z=1-143"/>
</dbReference>
<dbReference type="PDB" id="8P2K">
    <property type="method" value="EM"/>
    <property type="resolution" value="2.90 A"/>
    <property type="chains" value="Aw=1-143"/>
</dbReference>
<dbReference type="PDB" id="8SCB">
    <property type="method" value="EM"/>
    <property type="resolution" value="2.50 A"/>
    <property type="chains" value="XX=1-143"/>
</dbReference>
<dbReference type="PDB" id="8VFT">
    <property type="method" value="EM"/>
    <property type="resolution" value="3.30 A"/>
    <property type="chains" value="XX=1-143"/>
</dbReference>
<dbReference type="PDB" id="9BDL">
    <property type="method" value="EM"/>
    <property type="resolution" value="2.80 A"/>
    <property type="chains" value="AS23=2-142"/>
</dbReference>
<dbReference type="PDB" id="9BDN">
    <property type="method" value="EM"/>
    <property type="resolution" value="3.10 A"/>
    <property type="chains" value="AS23=2-142"/>
</dbReference>
<dbReference type="PDB" id="9BDP">
    <property type="method" value="EM"/>
    <property type="resolution" value="3.70 A"/>
    <property type="chains" value="AS23=2-142"/>
</dbReference>
<dbReference type="PDB" id="9C8K">
    <property type="method" value="EM"/>
    <property type="resolution" value="3.10 A"/>
    <property type="chains" value="X=1-143"/>
</dbReference>
<dbReference type="PDB" id="9F1B">
    <property type="method" value="EM"/>
    <property type="resolution" value="3.01 A"/>
    <property type="chains" value="Aw=1-143"/>
</dbReference>
<dbReference type="PDB" id="9F1C">
    <property type="method" value="EM"/>
    <property type="resolution" value="3.78 A"/>
    <property type="chains" value="Aw=1-143"/>
</dbReference>
<dbReference type="PDB" id="9F1D">
    <property type="method" value="EM"/>
    <property type="resolution" value="3.26 A"/>
    <property type="chains" value="Aw=1-143"/>
</dbReference>
<dbReference type="PDBsum" id="3JAG"/>
<dbReference type="PDBsum" id="3JAH"/>
<dbReference type="PDBsum" id="3JAI"/>
<dbReference type="PDBsum" id="4D5L"/>
<dbReference type="PDBsum" id="4D61"/>
<dbReference type="PDBsum" id="4KZX"/>
<dbReference type="PDBsum" id="4KZY"/>
<dbReference type="PDBsum" id="4KZZ"/>
<dbReference type="PDBsum" id="5K0Y"/>
<dbReference type="PDBsum" id="6D90"/>
<dbReference type="PDBsum" id="6D9J"/>
<dbReference type="PDBsum" id="6GZ3"/>
<dbReference type="PDBsum" id="6P4G"/>
<dbReference type="PDBsum" id="6P4H"/>
<dbReference type="PDBsum" id="6P5I"/>
<dbReference type="PDBsum" id="6P5J"/>
<dbReference type="PDBsum" id="6P5K"/>
<dbReference type="PDBsum" id="6P5N"/>
<dbReference type="PDBsum" id="6R5Q"/>
<dbReference type="PDBsum" id="6R6G"/>
<dbReference type="PDBsum" id="6R6P"/>
<dbReference type="PDBsum" id="6R7Q"/>
<dbReference type="PDBsum" id="6W2S"/>
<dbReference type="PDBsum" id="6W2T"/>
<dbReference type="PDBsum" id="6YAL"/>
<dbReference type="PDBsum" id="6YAM"/>
<dbReference type="PDBsum" id="6YAN"/>
<dbReference type="PDBsum" id="6ZVK"/>
<dbReference type="PDBsum" id="7A01"/>
<dbReference type="PDBsum" id="7JQB"/>
<dbReference type="PDBsum" id="7JQC"/>
<dbReference type="PDBsum" id="7MDZ"/>
<dbReference type="PDBsum" id="7NWG"/>
<dbReference type="PDBsum" id="7NWH"/>
<dbReference type="PDBsum" id="7NWI"/>
<dbReference type="PDBsum" id="7O7Y"/>
<dbReference type="PDBsum" id="7O7Z"/>
<dbReference type="PDBsum" id="7O80"/>
<dbReference type="PDBsum" id="7O81"/>
<dbReference type="PDBsum" id="7OYD"/>
<dbReference type="PDBsum" id="7SYG"/>
<dbReference type="PDBsum" id="7SYH"/>
<dbReference type="PDBsum" id="7SYI"/>
<dbReference type="PDBsum" id="7SYJ"/>
<dbReference type="PDBsum" id="7SYK"/>
<dbReference type="PDBsum" id="7SYL"/>
<dbReference type="PDBsum" id="7SYM"/>
<dbReference type="PDBsum" id="7SYN"/>
<dbReference type="PDBsum" id="7SYO"/>
<dbReference type="PDBsum" id="7SYP"/>
<dbReference type="PDBsum" id="7SYQ"/>
<dbReference type="PDBsum" id="7SYR"/>
<dbReference type="PDBsum" id="7SYS"/>
<dbReference type="PDBsum" id="7SYT"/>
<dbReference type="PDBsum" id="7SYU"/>
<dbReference type="PDBsum" id="7SYV"/>
<dbReference type="PDBsum" id="7SYW"/>
<dbReference type="PDBsum" id="7SYX"/>
<dbReference type="PDBsum" id="7TOQ"/>
<dbReference type="PDBsum" id="7TOR"/>
<dbReference type="PDBsum" id="7UCJ"/>
<dbReference type="PDBsum" id="7UCK"/>
<dbReference type="PDBsum" id="7ZJW"/>
<dbReference type="PDBsum" id="7ZJX"/>
<dbReference type="PDBsum" id="8BHF"/>
<dbReference type="PDBsum" id="8BTK"/>
<dbReference type="PDBsum" id="8P03"/>
<dbReference type="PDBsum" id="8P09"/>
<dbReference type="PDBsum" id="8P2K"/>
<dbReference type="PDBsum" id="8SCB"/>
<dbReference type="PDBsum" id="8VFT"/>
<dbReference type="PDBsum" id="9BDL"/>
<dbReference type="PDBsum" id="9BDN"/>
<dbReference type="PDBsum" id="9BDP"/>
<dbReference type="PDBsum" id="9C8K"/>
<dbReference type="PDBsum" id="9F1B"/>
<dbReference type="PDBsum" id="9F1C"/>
<dbReference type="PDBsum" id="9F1D"/>
<dbReference type="EMDB" id="EMD-0098"/>
<dbReference type="EMDB" id="EMD-0099"/>
<dbReference type="EMDB" id="EMD-0100"/>
<dbReference type="EMDB" id="EMD-0192"/>
<dbReference type="EMDB" id="EMD-0194"/>
<dbReference type="EMDB" id="EMD-0195"/>
<dbReference type="EMDB" id="EMD-0197"/>
<dbReference type="EMDB" id="EMD-10181"/>
<dbReference type="EMDB" id="EMD-10760"/>
<dbReference type="EMDB" id="EMD-10761"/>
<dbReference type="EMDB" id="EMD-10762"/>
<dbReference type="EMDB" id="EMD-11459"/>
<dbReference type="EMDB" id="EMD-11590"/>
<dbReference type="EMDB" id="EMD-12631"/>
<dbReference type="EMDB" id="EMD-12632"/>
<dbReference type="EMDB" id="EMD-12633"/>
<dbReference type="EMDB" id="EMD-12756"/>
<dbReference type="EMDB" id="EMD-12757"/>
<dbReference type="EMDB" id="EMD-12758"/>
<dbReference type="EMDB" id="EMD-12759"/>
<dbReference type="EMDB" id="EMD-13114"/>
<dbReference type="EMDB" id="EMD-14751"/>
<dbReference type="EMDB" id="EMD-14752"/>
<dbReference type="EMDB" id="EMD-16052"/>
<dbReference type="EMDB" id="EMD-16232"/>
<dbReference type="EMDB" id="EMD-17329"/>
<dbReference type="EMDB" id="EMD-17330"/>
<dbReference type="EMDB" id="EMD-17367"/>
<dbReference type="EMDB" id="EMD-20248"/>
<dbReference type="EMDB" id="EMD-20249"/>
<dbReference type="EMDB" id="EMD-20255"/>
<dbReference type="EMDB" id="EMD-20256"/>
<dbReference type="EMDB" id="EMD-20257"/>
<dbReference type="EMDB" id="EMD-20258"/>
<dbReference type="EMDB" id="EMD-21529"/>
<dbReference type="EMDB" id="EMD-21530"/>
<dbReference type="EMDB" id="EMD-22432"/>
<dbReference type="EMDB" id="EMD-22433"/>
<dbReference type="EMDB" id="EMD-23785"/>
<dbReference type="EMDB" id="EMD-25527"/>
<dbReference type="EMDB" id="EMD-25528"/>
<dbReference type="EMDB" id="EMD-25529"/>
<dbReference type="EMDB" id="EMD-25530"/>
<dbReference type="EMDB" id="EMD-25531"/>
<dbReference type="EMDB" id="EMD-25532"/>
<dbReference type="EMDB" id="EMD-25533"/>
<dbReference type="EMDB" id="EMD-25534"/>
<dbReference type="EMDB" id="EMD-25535"/>
<dbReference type="EMDB" id="EMD-25536"/>
<dbReference type="EMDB" id="EMD-25537"/>
<dbReference type="EMDB" id="EMD-25538"/>
<dbReference type="EMDB" id="EMD-25539"/>
<dbReference type="EMDB" id="EMD-25540"/>
<dbReference type="EMDB" id="EMD-25541"/>
<dbReference type="EMDB" id="EMD-25542"/>
<dbReference type="EMDB" id="EMD-25543"/>
<dbReference type="EMDB" id="EMD-25544"/>
<dbReference type="EMDB" id="EMD-26035"/>
<dbReference type="EMDB" id="EMD-26036"/>
<dbReference type="EMDB" id="EMD-26444"/>
<dbReference type="EMDB" id="EMD-26445"/>
<dbReference type="EMDB" id="EMD-40344"/>
<dbReference type="EMDB" id="EMD-4130"/>
<dbReference type="EMDB" id="EMD-4131"/>
<dbReference type="EMDB" id="EMD-4132"/>
<dbReference type="EMDB" id="EMD-4133"/>
<dbReference type="EMDB" id="EMD-4134"/>
<dbReference type="EMDB" id="EMD-4135"/>
<dbReference type="EMDB" id="EMD-4136"/>
<dbReference type="EMDB" id="EMD-4137"/>
<dbReference type="EMDB" id="EMD-43189"/>
<dbReference type="EMDB" id="EMD-44461"/>
<dbReference type="EMDB" id="EMD-44463"/>
<dbReference type="EMDB" id="EMD-44464"/>
<dbReference type="EMDB" id="EMD-45307"/>
<dbReference type="EMDB" id="EMD-4729"/>
<dbReference type="EMDB" id="EMD-4735"/>
<dbReference type="EMDB" id="EMD-4737"/>
<dbReference type="EMDB" id="EMD-4745"/>
<dbReference type="EMDB" id="EMD-50124"/>
<dbReference type="EMDB" id="EMD-50125"/>
<dbReference type="EMDB" id="EMD-50126"/>
<dbReference type="EMDB" id="EMD-7834"/>
<dbReference type="EMDB" id="EMD-7836"/>
<dbReference type="EMDB" id="EMD-8190"/>
<dbReference type="SMR" id="G1SZ47"/>
<dbReference type="PaxDb" id="9986-ENSOCUP00000008927"/>
<dbReference type="Ensembl" id="ENSOCUT00000010363.3">
    <property type="protein sequence ID" value="ENSOCUP00000008927.2"/>
    <property type="gene ID" value="ENSOCUG00000010363.3"/>
</dbReference>
<dbReference type="GeneID" id="100349244"/>
<dbReference type="KEGG" id="ocu:100349244"/>
<dbReference type="CTD" id="6228"/>
<dbReference type="eggNOG" id="KOG1749">
    <property type="taxonomic scope" value="Eukaryota"/>
</dbReference>
<dbReference type="GeneTree" id="ENSGT00550000074784"/>
<dbReference type="HOGENOM" id="CLU_115574_0_1_1"/>
<dbReference type="OrthoDB" id="9758353at2759"/>
<dbReference type="TreeFam" id="TF300871"/>
<dbReference type="EvolutionaryTrace" id="G1SZ47"/>
<dbReference type="Proteomes" id="UP000001811">
    <property type="component" value="Chromosome 11"/>
</dbReference>
<dbReference type="Bgee" id="ENSOCUG00000010363">
    <property type="expression patterns" value="Expressed in uterus and 17 other cell types or tissues"/>
</dbReference>
<dbReference type="ExpressionAtlas" id="G1SZ47">
    <property type="expression patterns" value="baseline"/>
</dbReference>
<dbReference type="GO" id="GO:0022626">
    <property type="term" value="C:cytosolic ribosome"/>
    <property type="evidence" value="ECO:0000314"/>
    <property type="project" value="UniProtKB"/>
</dbReference>
<dbReference type="GO" id="GO:0005730">
    <property type="term" value="C:nucleolus"/>
    <property type="evidence" value="ECO:0007669"/>
    <property type="project" value="UniProtKB-SubCell"/>
</dbReference>
<dbReference type="GO" id="GO:0005791">
    <property type="term" value="C:rough endoplasmic reticulum"/>
    <property type="evidence" value="ECO:0007669"/>
    <property type="project" value="UniProtKB-SubCell"/>
</dbReference>
<dbReference type="GO" id="GO:0015935">
    <property type="term" value="C:small ribosomal subunit"/>
    <property type="evidence" value="ECO:0007669"/>
    <property type="project" value="InterPro"/>
</dbReference>
<dbReference type="GO" id="GO:0003735">
    <property type="term" value="F:structural constituent of ribosome"/>
    <property type="evidence" value="ECO:0000314"/>
    <property type="project" value="UniProtKB"/>
</dbReference>
<dbReference type="GO" id="GO:0006412">
    <property type="term" value="P:translation"/>
    <property type="evidence" value="ECO:0007669"/>
    <property type="project" value="InterPro"/>
</dbReference>
<dbReference type="CDD" id="cd03367">
    <property type="entry name" value="Ribosomal_S23"/>
    <property type="match status" value="1"/>
</dbReference>
<dbReference type="FunFam" id="2.40.50.140:FF:000007">
    <property type="entry name" value="40S ribosomal protein S23"/>
    <property type="match status" value="1"/>
</dbReference>
<dbReference type="Gene3D" id="2.40.50.140">
    <property type="entry name" value="Nucleic acid-binding proteins"/>
    <property type="match status" value="1"/>
</dbReference>
<dbReference type="InterPro" id="IPR012340">
    <property type="entry name" value="NA-bd_OB-fold"/>
</dbReference>
<dbReference type="InterPro" id="IPR006032">
    <property type="entry name" value="Ribosomal_uS12"/>
</dbReference>
<dbReference type="InterPro" id="IPR005680">
    <property type="entry name" value="Ribosomal_uS12_euk/arc"/>
</dbReference>
<dbReference type="NCBIfam" id="NF003254">
    <property type="entry name" value="PRK04211.1"/>
    <property type="match status" value="1"/>
</dbReference>
<dbReference type="NCBIfam" id="TIGR00982">
    <property type="entry name" value="uS12_E_A"/>
    <property type="match status" value="1"/>
</dbReference>
<dbReference type="PANTHER" id="PTHR11652">
    <property type="entry name" value="30S RIBOSOMAL PROTEIN S12 FAMILY MEMBER"/>
    <property type="match status" value="1"/>
</dbReference>
<dbReference type="Pfam" id="PF00164">
    <property type="entry name" value="Ribosom_S12_S23"/>
    <property type="match status" value="1"/>
</dbReference>
<dbReference type="PIRSF" id="PIRSF002133">
    <property type="entry name" value="Ribosomal_S12/S23"/>
    <property type="match status" value="1"/>
</dbReference>
<dbReference type="SUPFAM" id="SSF50249">
    <property type="entry name" value="Nucleic acid-binding proteins"/>
    <property type="match status" value="1"/>
</dbReference>
<dbReference type="PROSITE" id="PS00055">
    <property type="entry name" value="RIBOSOMAL_S12"/>
    <property type="match status" value="1"/>
</dbReference>
<feature type="initiator methionine" description="Removed" evidence="1">
    <location>
        <position position="1"/>
    </location>
</feature>
<feature type="chain" id="PRO_0000460086" description="Small ribosomal subunit protein uS12">
    <location>
        <begin position="2"/>
        <end position="143"/>
    </location>
</feature>
<feature type="region of interest" description="Disordered" evidence="4">
    <location>
        <begin position="1"/>
        <end position="26"/>
    </location>
</feature>
<feature type="compositionally biased region" description="Basic residues" evidence="4">
    <location>
        <begin position="1"/>
        <end position="20"/>
    </location>
</feature>
<feature type="modified residue" description="N6-succinyllysine" evidence="2">
    <location>
        <position position="54"/>
    </location>
</feature>
<feature type="modified residue" description="3-hydroxyproline" evidence="1">
    <location>
        <position position="62"/>
    </location>
</feature>
<feature type="modified residue" description="N6-acetyllysine" evidence="1">
    <location>
        <position position="135"/>
    </location>
</feature>
<feature type="cross-link" description="Glycyl lysine isopeptide (Lys-Gly) (interchain with G-Cter in SUMO2)" evidence="1">
    <location>
        <position position="37"/>
    </location>
</feature>
<feature type="helix" evidence="46">
    <location>
        <begin position="10"/>
        <end position="20"/>
    </location>
</feature>
<feature type="helix" evidence="46">
    <location>
        <begin position="21"/>
        <end position="23"/>
    </location>
</feature>
<feature type="helix" evidence="46">
    <location>
        <begin position="25"/>
        <end position="31"/>
    </location>
</feature>
<feature type="helix" evidence="46">
    <location>
        <begin position="34"/>
        <end position="37"/>
    </location>
</feature>
<feature type="strand" evidence="46">
    <location>
        <begin position="40"/>
        <end position="43"/>
    </location>
</feature>
<feature type="strand" evidence="46">
    <location>
        <begin position="45"/>
        <end position="55"/>
    </location>
</feature>
<feature type="strand" evidence="43">
    <location>
        <begin position="61"/>
        <end position="63"/>
    </location>
</feature>
<feature type="strand" evidence="46">
    <location>
        <begin position="69"/>
        <end position="74"/>
    </location>
</feature>
<feature type="turn" evidence="46">
    <location>
        <begin position="75"/>
        <end position="77"/>
    </location>
</feature>
<feature type="strand" evidence="46">
    <location>
        <begin position="80"/>
        <end position="84"/>
    </location>
</feature>
<feature type="strand" evidence="45">
    <location>
        <begin position="87"/>
        <end position="89"/>
    </location>
</feature>
<feature type="helix" evidence="48">
    <location>
        <begin position="91"/>
        <end position="93"/>
    </location>
</feature>
<feature type="strand" evidence="46">
    <location>
        <begin position="100"/>
        <end position="104"/>
    </location>
</feature>
<feature type="strand" evidence="46">
    <location>
        <begin position="106"/>
        <end position="110"/>
    </location>
</feature>
<feature type="strand" evidence="47">
    <location>
        <begin position="113"/>
        <end position="115"/>
    </location>
</feature>
<feature type="strand" evidence="46">
    <location>
        <begin position="120"/>
        <end position="125"/>
    </location>
</feature>
<feature type="helix" evidence="46">
    <location>
        <begin position="130"/>
        <end position="134"/>
    </location>
</feature>
<feature type="strand" evidence="44">
    <location>
        <begin position="136"/>
        <end position="138"/>
    </location>
</feature>
<protein>
    <recommendedName>
        <fullName>Small ribosomal subunit protein uS12</fullName>
    </recommendedName>
    <alternativeName>
        <fullName>40S ribosomal protein S23</fullName>
    </alternativeName>
</protein>